<comment type="function">
    <text evidence="1">One of the primary rRNA binding proteins, it binds directly to 16S rRNA where it helps nucleate assembly of the platform of the 30S subunit by binding and bridging several RNA helices of the 16S rRNA.</text>
</comment>
<comment type="function">
    <text evidence="1">Forms an intersubunit bridge (bridge B4) with the 23S rRNA of the 50S subunit in the ribosome.</text>
</comment>
<comment type="subunit">
    <text evidence="1">Part of the 30S ribosomal subunit. Forms a bridge to the 50S subunit in the 70S ribosome, contacting the 23S rRNA.</text>
</comment>
<comment type="similarity">
    <text evidence="1">Belongs to the universal ribosomal protein uS15 family.</text>
</comment>
<proteinExistence type="inferred from homology"/>
<organism>
    <name type="scientific">Teredinibacter turnerae (strain ATCC 39867 / T7901)</name>
    <dbReference type="NCBI Taxonomy" id="377629"/>
    <lineage>
        <taxon>Bacteria</taxon>
        <taxon>Pseudomonadati</taxon>
        <taxon>Pseudomonadota</taxon>
        <taxon>Gammaproteobacteria</taxon>
        <taxon>Cellvibrionales</taxon>
        <taxon>Cellvibrionaceae</taxon>
        <taxon>Teredinibacter</taxon>
    </lineage>
</organism>
<accession>C5BPV6</accession>
<feature type="chain" id="PRO_1000214771" description="Small ribosomal subunit protein uS15">
    <location>
        <begin position="1"/>
        <end position="89"/>
    </location>
</feature>
<feature type="region of interest" description="Disordered" evidence="2">
    <location>
        <begin position="1"/>
        <end position="25"/>
    </location>
</feature>
<feature type="compositionally biased region" description="Basic and acidic residues" evidence="2">
    <location>
        <begin position="1"/>
        <end position="18"/>
    </location>
</feature>
<keyword id="KW-1185">Reference proteome</keyword>
<keyword id="KW-0687">Ribonucleoprotein</keyword>
<keyword id="KW-0689">Ribosomal protein</keyword>
<keyword id="KW-0694">RNA-binding</keyword>
<keyword id="KW-0699">rRNA-binding</keyword>
<dbReference type="EMBL" id="CP001614">
    <property type="protein sequence ID" value="ACR12729.1"/>
    <property type="molecule type" value="Genomic_DNA"/>
</dbReference>
<dbReference type="RefSeq" id="WP_015818841.1">
    <property type="nucleotide sequence ID" value="NC_012997.1"/>
</dbReference>
<dbReference type="SMR" id="C5BPV6"/>
<dbReference type="STRING" id="377629.TERTU_3214"/>
<dbReference type="GeneID" id="58410599"/>
<dbReference type="GeneID" id="93855670"/>
<dbReference type="KEGG" id="ttu:TERTU_3214"/>
<dbReference type="eggNOG" id="COG0184">
    <property type="taxonomic scope" value="Bacteria"/>
</dbReference>
<dbReference type="HOGENOM" id="CLU_148518_0_0_6"/>
<dbReference type="OrthoDB" id="9799262at2"/>
<dbReference type="Proteomes" id="UP000009080">
    <property type="component" value="Chromosome"/>
</dbReference>
<dbReference type="GO" id="GO:0022627">
    <property type="term" value="C:cytosolic small ribosomal subunit"/>
    <property type="evidence" value="ECO:0007669"/>
    <property type="project" value="TreeGrafter"/>
</dbReference>
<dbReference type="GO" id="GO:0019843">
    <property type="term" value="F:rRNA binding"/>
    <property type="evidence" value="ECO:0007669"/>
    <property type="project" value="UniProtKB-UniRule"/>
</dbReference>
<dbReference type="GO" id="GO:0003735">
    <property type="term" value="F:structural constituent of ribosome"/>
    <property type="evidence" value="ECO:0007669"/>
    <property type="project" value="InterPro"/>
</dbReference>
<dbReference type="GO" id="GO:0006412">
    <property type="term" value="P:translation"/>
    <property type="evidence" value="ECO:0007669"/>
    <property type="project" value="UniProtKB-UniRule"/>
</dbReference>
<dbReference type="CDD" id="cd00353">
    <property type="entry name" value="Ribosomal_S15p_S13e"/>
    <property type="match status" value="1"/>
</dbReference>
<dbReference type="FunFam" id="1.10.287.10:FF:000002">
    <property type="entry name" value="30S ribosomal protein S15"/>
    <property type="match status" value="1"/>
</dbReference>
<dbReference type="Gene3D" id="6.10.250.3130">
    <property type="match status" value="1"/>
</dbReference>
<dbReference type="Gene3D" id="1.10.287.10">
    <property type="entry name" value="S15/NS1, RNA-binding"/>
    <property type="match status" value="1"/>
</dbReference>
<dbReference type="HAMAP" id="MF_01343_B">
    <property type="entry name" value="Ribosomal_uS15_B"/>
    <property type="match status" value="1"/>
</dbReference>
<dbReference type="InterPro" id="IPR000589">
    <property type="entry name" value="Ribosomal_uS15"/>
</dbReference>
<dbReference type="InterPro" id="IPR005290">
    <property type="entry name" value="Ribosomal_uS15_bac-type"/>
</dbReference>
<dbReference type="InterPro" id="IPR009068">
    <property type="entry name" value="uS15_NS1_RNA-bd_sf"/>
</dbReference>
<dbReference type="NCBIfam" id="TIGR00952">
    <property type="entry name" value="S15_bact"/>
    <property type="match status" value="1"/>
</dbReference>
<dbReference type="PANTHER" id="PTHR23321">
    <property type="entry name" value="RIBOSOMAL PROTEIN S15, BACTERIAL AND ORGANELLAR"/>
    <property type="match status" value="1"/>
</dbReference>
<dbReference type="PANTHER" id="PTHR23321:SF26">
    <property type="entry name" value="SMALL RIBOSOMAL SUBUNIT PROTEIN US15M"/>
    <property type="match status" value="1"/>
</dbReference>
<dbReference type="Pfam" id="PF00312">
    <property type="entry name" value="Ribosomal_S15"/>
    <property type="match status" value="1"/>
</dbReference>
<dbReference type="SMART" id="SM01387">
    <property type="entry name" value="Ribosomal_S15"/>
    <property type="match status" value="1"/>
</dbReference>
<dbReference type="SUPFAM" id="SSF47060">
    <property type="entry name" value="S15/NS1 RNA-binding domain"/>
    <property type="match status" value="1"/>
</dbReference>
<dbReference type="PROSITE" id="PS00362">
    <property type="entry name" value="RIBOSOMAL_S15"/>
    <property type="match status" value="1"/>
</dbReference>
<reference key="1">
    <citation type="journal article" date="2009" name="PLoS ONE">
        <title>The complete genome of Teredinibacter turnerae T7901: an intracellular endosymbiont of marine wood-boring bivalves (shipworms).</title>
        <authorList>
            <person name="Yang J.C."/>
            <person name="Madupu R."/>
            <person name="Durkin A.S."/>
            <person name="Ekborg N.A."/>
            <person name="Pedamallu C.S."/>
            <person name="Hostetler J.B."/>
            <person name="Radune D."/>
            <person name="Toms B.S."/>
            <person name="Henrissat B."/>
            <person name="Coutinho P.M."/>
            <person name="Schwarz S."/>
            <person name="Field L."/>
            <person name="Trindade-Silva A.E."/>
            <person name="Soares C.A.G."/>
            <person name="Elshahawi S."/>
            <person name="Hanora A."/>
            <person name="Schmidt E.W."/>
            <person name="Haygood M.G."/>
            <person name="Posfai J."/>
            <person name="Benner J."/>
            <person name="Madinger C."/>
            <person name="Nove J."/>
            <person name="Anton B."/>
            <person name="Chaudhary K."/>
            <person name="Foster J."/>
            <person name="Holman A."/>
            <person name="Kumar S."/>
            <person name="Lessard P.A."/>
            <person name="Luyten Y.A."/>
            <person name="Slatko B."/>
            <person name="Wood N."/>
            <person name="Wu B."/>
            <person name="Teplitski M."/>
            <person name="Mougous J.D."/>
            <person name="Ward N."/>
            <person name="Eisen J.A."/>
            <person name="Badger J.H."/>
            <person name="Distel D.L."/>
        </authorList>
    </citation>
    <scope>NUCLEOTIDE SEQUENCE [LARGE SCALE GENOMIC DNA]</scope>
    <source>
        <strain>ATCC 39867 / T7901</strain>
    </source>
</reference>
<evidence type="ECO:0000255" key="1">
    <source>
        <dbReference type="HAMAP-Rule" id="MF_01343"/>
    </source>
</evidence>
<evidence type="ECO:0000256" key="2">
    <source>
        <dbReference type="SAM" id="MobiDB-lite"/>
    </source>
</evidence>
<evidence type="ECO:0000305" key="3"/>
<sequence>MALSAQEKDAIVKEHQTSETDTGSPEVQIALLTANINKLQGHFADHKQDHHSRRGLIRMVNQRRKLLDYLKGKDVNRYAALIQKLGLRR</sequence>
<name>RS15_TERTT</name>
<protein>
    <recommendedName>
        <fullName evidence="1">Small ribosomal subunit protein uS15</fullName>
    </recommendedName>
    <alternativeName>
        <fullName evidence="3">30S ribosomal protein S15</fullName>
    </alternativeName>
</protein>
<gene>
    <name evidence="1" type="primary">rpsO</name>
    <name type="ordered locus">TERTU_3214</name>
</gene>